<feature type="initiator methionine" description="Removed" evidence="1">
    <location>
        <position position="1"/>
    </location>
</feature>
<feature type="chain" id="PRO_0000194916" description="Cytochrome c oxidase subunit 6B1">
    <location>
        <begin position="2"/>
        <end position="86"/>
    </location>
</feature>
<feature type="domain" description="CHCH" evidence="3">
    <location>
        <begin position="27"/>
        <end position="73"/>
    </location>
</feature>
<feature type="short sequence motif" description="Cx9C motif" evidence="3">
    <location>
        <begin position="30"/>
        <end position="40"/>
    </location>
</feature>
<feature type="short sequence motif" description="Cx10C motif" evidence="3">
    <location>
        <begin position="54"/>
        <end position="65"/>
    </location>
</feature>
<feature type="modified residue" description="N-acetylalanine" evidence="1">
    <location>
        <position position="2"/>
    </location>
</feature>
<feature type="disulfide bond" evidence="3">
    <location>
        <begin position="30"/>
        <end position="65"/>
    </location>
</feature>
<feature type="disulfide bond" evidence="3">
    <location>
        <begin position="40"/>
        <end position="54"/>
    </location>
</feature>
<accession>Q5RCT0</accession>
<name>CX6B1_PONAB</name>
<protein>
    <recommendedName>
        <fullName>Cytochrome c oxidase subunit 6B1</fullName>
    </recommendedName>
    <alternativeName>
        <fullName>Cytochrome c oxidase subunit VIb isoform 1</fullName>
        <shortName>COX VIb-1</shortName>
    </alternativeName>
</protein>
<organism>
    <name type="scientific">Pongo abelii</name>
    <name type="common">Sumatran orangutan</name>
    <name type="synonym">Pongo pygmaeus abelii</name>
    <dbReference type="NCBI Taxonomy" id="9601"/>
    <lineage>
        <taxon>Eukaryota</taxon>
        <taxon>Metazoa</taxon>
        <taxon>Chordata</taxon>
        <taxon>Craniata</taxon>
        <taxon>Vertebrata</taxon>
        <taxon>Euteleostomi</taxon>
        <taxon>Mammalia</taxon>
        <taxon>Eutheria</taxon>
        <taxon>Euarchontoglires</taxon>
        <taxon>Primates</taxon>
        <taxon>Haplorrhini</taxon>
        <taxon>Catarrhini</taxon>
        <taxon>Hominidae</taxon>
        <taxon>Pongo</taxon>
    </lineage>
</organism>
<sequence length="86" mass="10192">MAEDMETKLKNYKTAPFDSRFPNQNQTRNCWQNYLDFHRCQKAMTAKGGDISVCEWYQRVYQSLCPTSWVTDWDEQRAEGTFPGKI</sequence>
<gene>
    <name type="primary">COX6B1</name>
</gene>
<dbReference type="EMBL" id="CR858188">
    <property type="protein sequence ID" value="CAH90427.1"/>
    <property type="molecule type" value="mRNA"/>
</dbReference>
<dbReference type="RefSeq" id="NP_001125213.1">
    <property type="nucleotide sequence ID" value="NM_001131741.1"/>
</dbReference>
<dbReference type="RefSeq" id="XP_054394316.1">
    <property type="nucleotide sequence ID" value="XM_054538341.2"/>
</dbReference>
<dbReference type="RefSeq" id="XP_054394317.1">
    <property type="nucleotide sequence ID" value="XM_054538342.2"/>
</dbReference>
<dbReference type="RefSeq" id="XP_054394318.1">
    <property type="nucleotide sequence ID" value="XM_054538343.2"/>
</dbReference>
<dbReference type="SMR" id="Q5RCT0"/>
<dbReference type="FunCoup" id="Q5RCT0">
    <property type="interactions" value="1353"/>
</dbReference>
<dbReference type="STRING" id="9601.ENSPPYP00000011053"/>
<dbReference type="Ensembl" id="ENSPPYT00000011485.2">
    <property type="protein sequence ID" value="ENSPPYP00000011053.2"/>
    <property type="gene ID" value="ENSPPYG00000009872.2"/>
</dbReference>
<dbReference type="GeneID" id="100172105"/>
<dbReference type="KEGG" id="pon:100172105"/>
<dbReference type="CTD" id="1340"/>
<dbReference type="eggNOG" id="KOG3057">
    <property type="taxonomic scope" value="Eukaryota"/>
</dbReference>
<dbReference type="GeneTree" id="ENSGT00940000162407"/>
<dbReference type="InParanoid" id="Q5RCT0"/>
<dbReference type="OrthoDB" id="1107506at2759"/>
<dbReference type="UniPathway" id="UPA00705"/>
<dbReference type="Proteomes" id="UP000001595">
    <property type="component" value="Chromosome 19"/>
</dbReference>
<dbReference type="GO" id="GO:0005743">
    <property type="term" value="C:mitochondrial inner membrane"/>
    <property type="evidence" value="ECO:0007669"/>
    <property type="project" value="UniProtKB-SubCell"/>
</dbReference>
<dbReference type="GO" id="GO:0045277">
    <property type="term" value="C:respiratory chain complex IV"/>
    <property type="evidence" value="ECO:0007669"/>
    <property type="project" value="InterPro"/>
</dbReference>
<dbReference type="GO" id="GO:0006119">
    <property type="term" value="P:oxidative phosphorylation"/>
    <property type="evidence" value="ECO:0007669"/>
    <property type="project" value="UniProtKB-UniPathway"/>
</dbReference>
<dbReference type="CDD" id="cd00926">
    <property type="entry name" value="Cyt_c_Oxidase_VIb"/>
    <property type="match status" value="1"/>
</dbReference>
<dbReference type="FunFam" id="1.10.10.140:FF:000001">
    <property type="entry name" value="Cytochrome c oxidase subunit 6B1"/>
    <property type="match status" value="1"/>
</dbReference>
<dbReference type="Gene3D" id="1.10.10.140">
    <property type="entry name" value="Cytochrome c oxidase, subunit VIb"/>
    <property type="match status" value="1"/>
</dbReference>
<dbReference type="InterPro" id="IPR048280">
    <property type="entry name" value="COX6B-like"/>
</dbReference>
<dbReference type="InterPro" id="IPR036549">
    <property type="entry name" value="CX6/COA6-like_sf"/>
</dbReference>
<dbReference type="InterPro" id="IPR003213">
    <property type="entry name" value="Cyt_c_oxidase_su6B"/>
</dbReference>
<dbReference type="PANTHER" id="PTHR11387">
    <property type="entry name" value="CYTOCHROME C OXIDASE SUBUNIT 6B"/>
    <property type="match status" value="1"/>
</dbReference>
<dbReference type="Pfam" id="PF02297">
    <property type="entry name" value="COX6B"/>
    <property type="match status" value="1"/>
</dbReference>
<dbReference type="PIRSF" id="PIRSF000278">
    <property type="entry name" value="Cyt_c_oxidase_6B"/>
    <property type="match status" value="1"/>
</dbReference>
<dbReference type="SUPFAM" id="SSF47694">
    <property type="entry name" value="Cytochrome c oxidase subunit h"/>
    <property type="match status" value="1"/>
</dbReference>
<dbReference type="PROSITE" id="PS51808">
    <property type="entry name" value="CHCH"/>
    <property type="match status" value="1"/>
</dbReference>
<reference key="1">
    <citation type="submission" date="2004-11" db="EMBL/GenBank/DDBJ databases">
        <authorList>
            <consortium name="The German cDNA consortium"/>
        </authorList>
    </citation>
    <scope>NUCLEOTIDE SEQUENCE [LARGE SCALE MRNA]</scope>
    <source>
        <tissue>Kidney</tissue>
    </source>
</reference>
<evidence type="ECO:0000250" key="1">
    <source>
        <dbReference type="UniProtKB" id="P00429"/>
    </source>
</evidence>
<evidence type="ECO:0000250" key="2">
    <source>
        <dbReference type="UniProtKB" id="Q01519"/>
    </source>
</evidence>
<evidence type="ECO:0000255" key="3">
    <source>
        <dbReference type="PROSITE-ProRule" id="PRU01150"/>
    </source>
</evidence>
<evidence type="ECO:0000305" key="4"/>
<comment type="function">
    <text evidence="2">Component of the cytochrome c oxidase, the last enzyme in the mitochondrial electron transport chain which drives oxidative phosphorylation. The respiratory chain contains 3 multisubunit complexes succinate dehydrogenase (complex II, CII), ubiquinol-cytochrome c oxidoreductase (cytochrome b-c1 complex, complex III, CIII) and cytochrome c oxidase (complex IV, CIV), that cooperate to transfer electrons derived from NADH and succinate to molecular oxygen, creating an electrochemical gradient over the inner membrane that drives transmembrane transport and the ATP synthase. Cytochrome c oxidase is the component of the respiratory chain that catalyzes the reduction of oxygen to water. Electrons originating from reduced cytochrome c in the intermembrane space (IMS) are transferred via the dinuclear copper A center (CU(A)) of subunit 2 and heme A of subunit 1 to the active site in subunit 1, a binuclear center (BNC) formed by heme A3 and copper B (CU(B)). The BNC reduces molecular oxygen to 2 water molecules using 4 electrons from cytochrome c in the IMS and 4 protons from the mitochondrial matrix.</text>
</comment>
<comment type="pathway">
    <text evidence="2">Energy metabolism; oxidative phosphorylation.</text>
</comment>
<comment type="subunit">
    <text evidence="1">Component of the cytochrome c oxidase (complex IV, CIV), a multisubunit enzyme composed of 14 subunits. The complex is composed of a catalytic core of 3 subunits MT-CO1, MT-CO2 and MT-CO3, encoded in the mitochondrial DNA, and 11 supernumerary subunits COX4I, COX5A, COX5B, COX6A, COX6B, COX6C, COX7A, COX7B, COX7C, COX8 and NDUFA4, which are encoded in the nuclear genome. The complex exists as a monomer or a dimer and forms supercomplexes (SCs) in the inner mitochondrial membrane with NADH-ubiquinone oxidoreductase (complex I, CI) and ubiquinol-cytochrome c oxidoreductase (cytochrome b-c1 complex, complex III, CIII), resulting in different assemblies (supercomplex SCI(1)III(2)IV(1) and megacomplex MCI(2)III(2)IV(2)).</text>
</comment>
<comment type="subcellular location">
    <subcellularLocation>
        <location evidence="1">Mitochondrion inner membrane</location>
        <topology evidence="1">Peripheral membrane protein</topology>
        <orientation evidence="1">Intermembrane side</orientation>
    </subcellularLocation>
</comment>
<comment type="similarity">
    <text evidence="4">Belongs to the cytochrome c oxidase subunit 6B family.</text>
</comment>
<keyword id="KW-0007">Acetylation</keyword>
<keyword id="KW-1015">Disulfide bond</keyword>
<keyword id="KW-0472">Membrane</keyword>
<keyword id="KW-0496">Mitochondrion</keyword>
<keyword id="KW-0999">Mitochondrion inner membrane</keyword>
<keyword id="KW-1185">Reference proteome</keyword>
<proteinExistence type="inferred from homology"/>